<feature type="chain" id="PRO_0000082809" description="Peptide deformylase 1">
    <location>
        <begin position="1"/>
        <end position="176"/>
    </location>
</feature>
<feature type="active site" evidence="1">
    <location>
        <position position="142"/>
    </location>
</feature>
<feature type="binding site" evidence="1">
    <location>
        <position position="99"/>
    </location>
    <ligand>
        <name>Fe cation</name>
        <dbReference type="ChEBI" id="CHEBI:24875"/>
    </ligand>
</feature>
<feature type="binding site" evidence="1">
    <location>
        <position position="141"/>
    </location>
    <ligand>
        <name>Fe cation</name>
        <dbReference type="ChEBI" id="CHEBI:24875"/>
    </ligand>
</feature>
<feature type="binding site" evidence="1">
    <location>
        <position position="145"/>
    </location>
    <ligand>
        <name>Fe cation</name>
        <dbReference type="ChEBI" id="CHEBI:24875"/>
    </ligand>
</feature>
<proteinExistence type="inferred from homology"/>
<organism>
    <name type="scientific">Nitrosomonas europaea (strain ATCC 19718 / CIP 103999 / KCTC 2705 / NBRC 14298)</name>
    <dbReference type="NCBI Taxonomy" id="228410"/>
    <lineage>
        <taxon>Bacteria</taxon>
        <taxon>Pseudomonadati</taxon>
        <taxon>Pseudomonadota</taxon>
        <taxon>Betaproteobacteria</taxon>
        <taxon>Nitrosomonadales</taxon>
        <taxon>Nitrosomonadaceae</taxon>
        <taxon>Nitrosomonas</taxon>
    </lineage>
</organism>
<evidence type="ECO:0000255" key="1">
    <source>
        <dbReference type="HAMAP-Rule" id="MF_00163"/>
    </source>
</evidence>
<sequence length="176" mass="19421">MIKPVLKMGDPCLLQPARRVDQFGTPELEALLQDMQDTMAALNGAGLAAPQIGVSLQVVIFGVEHSPRYPDAESVPFTVLINPVLTPLTEQMEEDWEGCLSIPGMRGLVPRYTRLRYQGVDAAGASIDRTVTGFHARVVQHECDHLNGILYPMRINDLRKFGYTDTLFPGQTIADD</sequence>
<protein>
    <recommendedName>
        <fullName evidence="1">Peptide deformylase 1</fullName>
        <shortName evidence="1">PDF 1</shortName>
        <ecNumber evidence="1">3.5.1.88</ecNumber>
    </recommendedName>
    <alternativeName>
        <fullName evidence="1">Polypeptide deformylase 1</fullName>
    </alternativeName>
</protein>
<reference key="1">
    <citation type="journal article" date="2003" name="J. Bacteriol.">
        <title>Complete genome sequence of the ammonia-oxidizing bacterium and obligate chemolithoautotroph Nitrosomonas europaea.</title>
        <authorList>
            <person name="Chain P."/>
            <person name="Lamerdin J.E."/>
            <person name="Larimer F.W."/>
            <person name="Regala W."/>
            <person name="Lao V."/>
            <person name="Land M.L."/>
            <person name="Hauser L."/>
            <person name="Hooper A.B."/>
            <person name="Klotz M.G."/>
            <person name="Norton J."/>
            <person name="Sayavedra-Soto L.A."/>
            <person name="Arciero D.M."/>
            <person name="Hommes N.G."/>
            <person name="Whittaker M.M."/>
            <person name="Arp D.J."/>
        </authorList>
    </citation>
    <scope>NUCLEOTIDE SEQUENCE [LARGE SCALE GENOMIC DNA]</scope>
    <source>
        <strain>ATCC 19718 / CIP 103999 / KCTC 2705 / NBRC 14298</strain>
    </source>
</reference>
<dbReference type="EC" id="3.5.1.88" evidence="1"/>
<dbReference type="EMBL" id="AL954747">
    <property type="protein sequence ID" value="CAD85666.1"/>
    <property type="molecule type" value="Genomic_DNA"/>
</dbReference>
<dbReference type="SMR" id="Q82TW4"/>
<dbReference type="STRING" id="228410.NE1755"/>
<dbReference type="GeneID" id="87104915"/>
<dbReference type="KEGG" id="neu:NE1755"/>
<dbReference type="eggNOG" id="COG0242">
    <property type="taxonomic scope" value="Bacteria"/>
</dbReference>
<dbReference type="HOGENOM" id="CLU_061901_5_2_4"/>
<dbReference type="OrthoDB" id="9804313at2"/>
<dbReference type="PhylomeDB" id="Q82TW4"/>
<dbReference type="Proteomes" id="UP000001416">
    <property type="component" value="Chromosome"/>
</dbReference>
<dbReference type="GO" id="GO:0046872">
    <property type="term" value="F:metal ion binding"/>
    <property type="evidence" value="ECO:0007669"/>
    <property type="project" value="UniProtKB-KW"/>
</dbReference>
<dbReference type="GO" id="GO:0042586">
    <property type="term" value="F:peptide deformylase activity"/>
    <property type="evidence" value="ECO:0007669"/>
    <property type="project" value="UniProtKB-UniRule"/>
</dbReference>
<dbReference type="GO" id="GO:0043686">
    <property type="term" value="P:co-translational protein modification"/>
    <property type="evidence" value="ECO:0007669"/>
    <property type="project" value="TreeGrafter"/>
</dbReference>
<dbReference type="GO" id="GO:0006412">
    <property type="term" value="P:translation"/>
    <property type="evidence" value="ECO:0007669"/>
    <property type="project" value="UniProtKB-UniRule"/>
</dbReference>
<dbReference type="CDD" id="cd00487">
    <property type="entry name" value="Pep_deformylase"/>
    <property type="match status" value="1"/>
</dbReference>
<dbReference type="FunFam" id="3.90.45.10:FF:000003">
    <property type="entry name" value="Peptide deformylase"/>
    <property type="match status" value="1"/>
</dbReference>
<dbReference type="Gene3D" id="3.90.45.10">
    <property type="entry name" value="Peptide deformylase"/>
    <property type="match status" value="1"/>
</dbReference>
<dbReference type="HAMAP" id="MF_00163">
    <property type="entry name" value="Pep_deformylase"/>
    <property type="match status" value="1"/>
</dbReference>
<dbReference type="InterPro" id="IPR023635">
    <property type="entry name" value="Peptide_deformylase"/>
</dbReference>
<dbReference type="InterPro" id="IPR036821">
    <property type="entry name" value="Peptide_deformylase_sf"/>
</dbReference>
<dbReference type="NCBIfam" id="TIGR00079">
    <property type="entry name" value="pept_deformyl"/>
    <property type="match status" value="1"/>
</dbReference>
<dbReference type="NCBIfam" id="NF001159">
    <property type="entry name" value="PRK00150.1-3"/>
    <property type="match status" value="1"/>
</dbReference>
<dbReference type="PANTHER" id="PTHR10458">
    <property type="entry name" value="PEPTIDE DEFORMYLASE"/>
    <property type="match status" value="1"/>
</dbReference>
<dbReference type="PANTHER" id="PTHR10458:SF20">
    <property type="entry name" value="PEPTIDE DEFORMYLASE 1"/>
    <property type="match status" value="1"/>
</dbReference>
<dbReference type="Pfam" id="PF01327">
    <property type="entry name" value="Pep_deformylase"/>
    <property type="match status" value="1"/>
</dbReference>
<dbReference type="PIRSF" id="PIRSF004749">
    <property type="entry name" value="Pep_def"/>
    <property type="match status" value="1"/>
</dbReference>
<dbReference type="PRINTS" id="PR01576">
    <property type="entry name" value="PDEFORMYLASE"/>
</dbReference>
<dbReference type="SUPFAM" id="SSF56420">
    <property type="entry name" value="Peptide deformylase"/>
    <property type="match status" value="1"/>
</dbReference>
<keyword id="KW-0378">Hydrolase</keyword>
<keyword id="KW-0408">Iron</keyword>
<keyword id="KW-0479">Metal-binding</keyword>
<keyword id="KW-0648">Protein biosynthesis</keyword>
<keyword id="KW-1185">Reference proteome</keyword>
<gene>
    <name evidence="1" type="primary">def1</name>
    <name type="ordered locus">NE1755</name>
</gene>
<name>DEF1_NITEU</name>
<comment type="function">
    <text evidence="1">Removes the formyl group from the N-terminal Met of newly synthesized proteins. Requires at least a dipeptide for an efficient rate of reaction. N-terminal L-methionine is a prerequisite for activity but the enzyme has broad specificity at other positions.</text>
</comment>
<comment type="catalytic activity">
    <reaction evidence="1">
        <text>N-terminal N-formyl-L-methionyl-[peptide] + H2O = N-terminal L-methionyl-[peptide] + formate</text>
        <dbReference type="Rhea" id="RHEA:24420"/>
        <dbReference type="Rhea" id="RHEA-COMP:10639"/>
        <dbReference type="Rhea" id="RHEA-COMP:10640"/>
        <dbReference type="ChEBI" id="CHEBI:15377"/>
        <dbReference type="ChEBI" id="CHEBI:15740"/>
        <dbReference type="ChEBI" id="CHEBI:49298"/>
        <dbReference type="ChEBI" id="CHEBI:64731"/>
        <dbReference type="EC" id="3.5.1.88"/>
    </reaction>
</comment>
<comment type="cofactor">
    <cofactor evidence="1">
        <name>Fe(2+)</name>
        <dbReference type="ChEBI" id="CHEBI:29033"/>
    </cofactor>
    <text evidence="1">Binds 1 Fe(2+) ion.</text>
</comment>
<comment type="similarity">
    <text evidence="1">Belongs to the polypeptide deformylase family.</text>
</comment>
<accession>Q82TW4</accession>